<name>SIX4_MOUSE</name>
<protein>
    <recommendedName>
        <fullName>Homeobox protein SIX4</fullName>
    </recommendedName>
    <alternativeName>
        <fullName>Sine oculis homeobox homolog 4</fullName>
    </alternativeName>
    <alternativeName>
        <fullName>Skeletal muscle-specific ARE-binding protein AREC3</fullName>
    </alternativeName>
</protein>
<proteinExistence type="evidence at protein level"/>
<evidence type="ECO:0000250" key="1">
    <source>
        <dbReference type="UniProtKB" id="Q9UIU6"/>
    </source>
</evidence>
<evidence type="ECO:0000255" key="2">
    <source>
        <dbReference type="PROSITE-ProRule" id="PRU00108"/>
    </source>
</evidence>
<evidence type="ECO:0000256" key="3">
    <source>
        <dbReference type="SAM" id="MobiDB-lite"/>
    </source>
</evidence>
<evidence type="ECO:0000269" key="4">
    <source>
    </source>
</evidence>
<evidence type="ECO:0000269" key="5">
    <source>
    </source>
</evidence>
<evidence type="ECO:0000269" key="6">
    <source>
    </source>
</evidence>
<evidence type="ECO:0000269" key="7">
    <source>
    </source>
</evidence>
<evidence type="ECO:0000269" key="8">
    <source>
    </source>
</evidence>
<evidence type="ECO:0000269" key="9">
    <source>
    </source>
</evidence>
<evidence type="ECO:0000269" key="10">
    <source>
    </source>
</evidence>
<evidence type="ECO:0000269" key="11">
    <source>
    </source>
</evidence>
<evidence type="ECO:0000269" key="12">
    <source>
    </source>
</evidence>
<evidence type="ECO:0000269" key="13">
    <source>
    </source>
</evidence>
<evidence type="ECO:0000269" key="14">
    <source>
    </source>
</evidence>
<evidence type="ECO:0000269" key="15">
    <source>
    </source>
</evidence>
<evidence type="ECO:0000269" key="16">
    <source>
    </source>
</evidence>
<evidence type="ECO:0000269" key="17">
    <source>
    </source>
</evidence>
<evidence type="ECO:0000269" key="18">
    <source>
    </source>
</evidence>
<evidence type="ECO:0000269" key="19">
    <source>
    </source>
</evidence>
<evidence type="ECO:0000269" key="20">
    <source>
    </source>
</evidence>
<evidence type="ECO:0000269" key="21">
    <source>
    </source>
</evidence>
<evidence type="ECO:0000269" key="22">
    <source>
    </source>
</evidence>
<evidence type="ECO:0000303" key="23">
    <source>
    </source>
</evidence>
<evidence type="ECO:0000305" key="24"/>
<keyword id="KW-0007">Acetylation</keyword>
<keyword id="KW-0025">Alternative splicing</keyword>
<keyword id="KW-0963">Cytoplasm</keyword>
<keyword id="KW-0217">Developmental protein</keyword>
<keyword id="KW-0238">DNA-binding</keyword>
<keyword id="KW-0371">Homeobox</keyword>
<keyword id="KW-0539">Nucleus</keyword>
<keyword id="KW-0597">Phosphoprotein</keyword>
<keyword id="KW-1185">Reference proteome</keyword>
<keyword id="KW-0804">Transcription</keyword>
<keyword id="KW-0805">Transcription regulation</keyword>
<organism>
    <name type="scientific">Mus musculus</name>
    <name type="common">Mouse</name>
    <dbReference type="NCBI Taxonomy" id="10090"/>
    <lineage>
        <taxon>Eukaryota</taxon>
        <taxon>Metazoa</taxon>
        <taxon>Chordata</taxon>
        <taxon>Craniata</taxon>
        <taxon>Vertebrata</taxon>
        <taxon>Euteleostomi</taxon>
        <taxon>Mammalia</taxon>
        <taxon>Eutheria</taxon>
        <taxon>Euarchontoglires</taxon>
        <taxon>Glires</taxon>
        <taxon>Rodentia</taxon>
        <taxon>Myomorpha</taxon>
        <taxon>Muroidea</taxon>
        <taxon>Muridae</taxon>
        <taxon>Murinae</taxon>
        <taxon>Mus</taxon>
        <taxon>Mus</taxon>
    </lineage>
</organism>
<sequence>MSSSSPTGQIASAADIKQENGMESASEGQEAHREVAGGAAAGLSPPAPAPFPLEPGDAAAASRVSREEGAAAAGAADQVQLHSELLGRHQHAAAAQPPLAFSPDHVACVCEALQQGGNLDRLARFLWSLPQSDLLRGNESLLKARALVAFHQGIYPELYSILESHSFESANHPLLQQLWYKARYTEAERARGRPLGAVDKYRLRRKFPLPRTIWDGEETVYCFKEKSRNALKELYKQNRYPSPAEKRHLAKITGLSLTQVSNWFKNRRQRDRNPSETQSKSESDGNPSTEDESSKGHEDLSPHPLSGASDGVTNLSLSSHVEPVYMQQIGNAKISLSSSGVLLNGSLVPASTSPVFLNGNSFIQGHNGVILNGLNVGNTQTVSLNPPKMSSNIVGNGIAMTDILGSTSQDVKEFKVLQSSAVNSAATTSYSPSAPVSFPGLIPCTEVKREGIQTVASQDGGSVVTFTTPVQINQYGIVQIPNSGANGQFLNGSIGFSPLQLPPVSVAASQGNLSVTPSTSDGSTFTSEPATVQHGKLFLSPLTPSAVVYTVPNSGQTVGAVKQEGLERGLVFSQLMPVNHSAQVNASLSSENLSGSGLHPLTSSLVNVSAAHGFSLTPPTLLNPTELNPDLAESQPVSAPVASKCTVSSVSNTNYATLQNCSLIPGQDLLSGPMTQAALGEIVPTAEEQVSHASTAVHQDFVREQRLVLQSVPNIKENFLQNSENKATNNLMMLDSKSKYVLDGMVEAGCEDLGTDKKELAKLQTVQLDEDMQDL</sequence>
<accession>Q61321</accession>
<accession>B2RQH3</accession>
<accession>Q61322</accession>
<accession>Q61323</accession>
<gene>
    <name type="primary">Six4</name>
    <name type="synonym">Arec3</name>
</gene>
<dbReference type="EMBL" id="D50416">
    <property type="protein sequence ID" value="BAA08915.1"/>
    <property type="molecule type" value="mRNA"/>
</dbReference>
<dbReference type="EMBL" id="D50417">
    <property type="protein sequence ID" value="BAA08916.1"/>
    <property type="molecule type" value="mRNA"/>
</dbReference>
<dbReference type="EMBL" id="D50418">
    <property type="protein sequence ID" value="BAA08917.1"/>
    <property type="molecule type" value="mRNA"/>
</dbReference>
<dbReference type="EMBL" id="BC137931">
    <property type="protein sequence ID" value="AAI37932.1"/>
    <property type="molecule type" value="mRNA"/>
</dbReference>
<dbReference type="EMBL" id="BC137934">
    <property type="protein sequence ID" value="AAI37935.1"/>
    <property type="molecule type" value="mRNA"/>
</dbReference>
<dbReference type="CCDS" id="CCDS25974.1">
    <molecule id="Q61321-1"/>
</dbReference>
<dbReference type="PIR" id="S63626">
    <property type="entry name" value="S63626"/>
</dbReference>
<dbReference type="PIR" id="S63628">
    <property type="entry name" value="S63628"/>
</dbReference>
<dbReference type="PIR" id="S63629">
    <property type="entry name" value="S63629"/>
</dbReference>
<dbReference type="RefSeq" id="NP_035512.1">
    <molecule id="Q61321-1"/>
    <property type="nucleotide sequence ID" value="NM_011382.3"/>
</dbReference>
<dbReference type="SMR" id="Q61321"/>
<dbReference type="BioGRID" id="203262">
    <property type="interactions" value="1"/>
</dbReference>
<dbReference type="FunCoup" id="Q61321">
    <property type="interactions" value="997"/>
</dbReference>
<dbReference type="IntAct" id="Q61321">
    <property type="interactions" value="2"/>
</dbReference>
<dbReference type="MINT" id="Q61321"/>
<dbReference type="STRING" id="10090.ENSMUSP00000036150"/>
<dbReference type="GlyGen" id="Q61321">
    <property type="glycosylation" value="3 sites, 1 O-linked glycan (3 sites)"/>
</dbReference>
<dbReference type="PhosphoSitePlus" id="Q61321"/>
<dbReference type="PaxDb" id="10090-ENSMUSP00000036150"/>
<dbReference type="ProteomicsDB" id="257184">
    <molecule id="Q61321-1"/>
</dbReference>
<dbReference type="ProteomicsDB" id="257185">
    <molecule id="Q61321-2"/>
</dbReference>
<dbReference type="ProteomicsDB" id="257186">
    <molecule id="Q61321-3"/>
</dbReference>
<dbReference type="Pumba" id="Q61321"/>
<dbReference type="Antibodypedia" id="24389">
    <property type="antibodies" value="179 antibodies from 27 providers"/>
</dbReference>
<dbReference type="DNASU" id="20474"/>
<dbReference type="Ensembl" id="ENSMUST00000043208.8">
    <molecule id="Q61321-1"/>
    <property type="protein sequence ID" value="ENSMUSP00000036150.7"/>
    <property type="gene ID" value="ENSMUSG00000034460.10"/>
</dbReference>
<dbReference type="GeneID" id="20474"/>
<dbReference type="KEGG" id="mmu:20474"/>
<dbReference type="UCSC" id="uc007nwb.1">
    <molecule id="Q61321-1"/>
    <property type="organism name" value="mouse"/>
</dbReference>
<dbReference type="AGR" id="MGI:106034"/>
<dbReference type="CTD" id="51804"/>
<dbReference type="MGI" id="MGI:106034">
    <property type="gene designation" value="Six4"/>
</dbReference>
<dbReference type="VEuPathDB" id="HostDB:ENSMUSG00000034460"/>
<dbReference type="eggNOG" id="KOG0775">
    <property type="taxonomic scope" value="Eukaryota"/>
</dbReference>
<dbReference type="GeneTree" id="ENSGT00940000160820"/>
<dbReference type="HOGENOM" id="CLU_020633_2_0_1"/>
<dbReference type="InParanoid" id="Q61321"/>
<dbReference type="OMA" id="MCGEMEA"/>
<dbReference type="OrthoDB" id="3501850at2759"/>
<dbReference type="PhylomeDB" id="Q61321"/>
<dbReference type="TreeFam" id="TF315545"/>
<dbReference type="BioGRID-ORCS" id="20474">
    <property type="hits" value="2 hits in 78 CRISPR screens"/>
</dbReference>
<dbReference type="PRO" id="PR:Q61321"/>
<dbReference type="Proteomes" id="UP000000589">
    <property type="component" value="Chromosome 12"/>
</dbReference>
<dbReference type="RNAct" id="Q61321">
    <property type="molecule type" value="protein"/>
</dbReference>
<dbReference type="Bgee" id="ENSMUSG00000034460">
    <property type="expression patterns" value="Expressed in lumbar dorsal root ganglion and 212 other cell types or tissues"/>
</dbReference>
<dbReference type="ExpressionAtlas" id="Q61321">
    <property type="expression patterns" value="baseline and differential"/>
</dbReference>
<dbReference type="GO" id="GO:0005737">
    <property type="term" value="C:cytoplasm"/>
    <property type="evidence" value="ECO:0000314"/>
    <property type="project" value="UniProtKB"/>
</dbReference>
<dbReference type="GO" id="GO:0005634">
    <property type="term" value="C:nucleus"/>
    <property type="evidence" value="ECO:0000314"/>
    <property type="project" value="UniProtKB"/>
</dbReference>
<dbReference type="GO" id="GO:0003677">
    <property type="term" value="F:DNA binding"/>
    <property type="evidence" value="ECO:0000314"/>
    <property type="project" value="MGI"/>
</dbReference>
<dbReference type="GO" id="GO:0001228">
    <property type="term" value="F:DNA-binding transcription activator activity, RNA polymerase II-specific"/>
    <property type="evidence" value="ECO:0000314"/>
    <property type="project" value="NTNU_SB"/>
</dbReference>
<dbReference type="GO" id="GO:0003700">
    <property type="term" value="F:DNA-binding transcription factor activity"/>
    <property type="evidence" value="ECO:0000314"/>
    <property type="project" value="MGI"/>
</dbReference>
<dbReference type="GO" id="GO:0000978">
    <property type="term" value="F:RNA polymerase II cis-regulatory region sequence-specific DNA binding"/>
    <property type="evidence" value="ECO:0000314"/>
    <property type="project" value="NTNU_SB"/>
</dbReference>
<dbReference type="GO" id="GO:0043565">
    <property type="term" value="F:sequence-specific DNA binding"/>
    <property type="evidence" value="ECO:0000314"/>
    <property type="project" value="MGI"/>
</dbReference>
<dbReference type="GO" id="GO:0048701">
    <property type="term" value="P:embryonic cranial skeleton morphogenesis"/>
    <property type="evidence" value="ECO:0000316"/>
    <property type="project" value="MGI"/>
</dbReference>
<dbReference type="GO" id="GO:0048704">
    <property type="term" value="P:embryonic skeletal system morphogenesis"/>
    <property type="evidence" value="ECO:0000316"/>
    <property type="project" value="MGI"/>
</dbReference>
<dbReference type="GO" id="GO:0061197">
    <property type="term" value="P:fungiform papilla morphogenesis"/>
    <property type="evidence" value="ECO:0000315"/>
    <property type="project" value="UniProtKB"/>
</dbReference>
<dbReference type="GO" id="GO:0048699">
    <property type="term" value="P:generation of neurons"/>
    <property type="evidence" value="ECO:0000315"/>
    <property type="project" value="UniProtKB"/>
</dbReference>
<dbReference type="GO" id="GO:0042472">
    <property type="term" value="P:inner ear morphogenesis"/>
    <property type="evidence" value="ECO:0000316"/>
    <property type="project" value="MGI"/>
</dbReference>
<dbReference type="GO" id="GO:0008584">
    <property type="term" value="P:male gonad development"/>
    <property type="evidence" value="ECO:0000315"/>
    <property type="project" value="UniProtKB"/>
</dbReference>
<dbReference type="GO" id="GO:0030238">
    <property type="term" value="P:male sex determination"/>
    <property type="evidence" value="ECO:0000315"/>
    <property type="project" value="UniProtKB"/>
</dbReference>
<dbReference type="GO" id="GO:0046661">
    <property type="term" value="P:male sex differentiation"/>
    <property type="evidence" value="ECO:0000315"/>
    <property type="project" value="UniProtKB"/>
</dbReference>
<dbReference type="GO" id="GO:0072075">
    <property type="term" value="P:metanephric mesenchyme development"/>
    <property type="evidence" value="ECO:0000315"/>
    <property type="project" value="UniProtKB"/>
</dbReference>
<dbReference type="GO" id="GO:0051451">
    <property type="term" value="P:myoblast migration"/>
    <property type="evidence" value="ECO:0000316"/>
    <property type="project" value="MGI"/>
</dbReference>
<dbReference type="GO" id="GO:0061055">
    <property type="term" value="P:myotome development"/>
    <property type="evidence" value="ECO:0000315"/>
    <property type="project" value="UniProtKB"/>
</dbReference>
<dbReference type="GO" id="GO:0043066">
    <property type="term" value="P:negative regulation of apoptotic process"/>
    <property type="evidence" value="ECO:0000315"/>
    <property type="project" value="UniProtKB"/>
</dbReference>
<dbReference type="GO" id="GO:0045892">
    <property type="term" value="P:negative regulation of DNA-templated transcription"/>
    <property type="evidence" value="ECO:0000314"/>
    <property type="project" value="UniProtKB"/>
</dbReference>
<dbReference type="GO" id="GO:0043524">
    <property type="term" value="P:negative regulation of neuron apoptotic process"/>
    <property type="evidence" value="ECO:0000315"/>
    <property type="project" value="UniProtKB"/>
</dbReference>
<dbReference type="GO" id="GO:1902725">
    <property type="term" value="P:negative regulation of satellite cell differentiation"/>
    <property type="evidence" value="ECO:0000315"/>
    <property type="project" value="UniProtKB"/>
</dbReference>
<dbReference type="GO" id="GO:0030910">
    <property type="term" value="P:olfactory placode formation"/>
    <property type="evidence" value="ECO:0000315"/>
    <property type="project" value="UniProtKB"/>
</dbReference>
<dbReference type="GO" id="GO:0060037">
    <property type="term" value="P:pharyngeal system development"/>
    <property type="evidence" value="ECO:0000315"/>
    <property type="project" value="UniProtKB"/>
</dbReference>
<dbReference type="GO" id="GO:0090190">
    <property type="term" value="P:positive regulation of branching involved in ureteric bud morphogenesis"/>
    <property type="evidence" value="ECO:0000315"/>
    <property type="project" value="UniProtKB"/>
</dbReference>
<dbReference type="GO" id="GO:0045893">
    <property type="term" value="P:positive regulation of DNA-templated transcription"/>
    <property type="evidence" value="ECO:0000314"/>
    <property type="project" value="UniProtKB"/>
</dbReference>
<dbReference type="GO" id="GO:0045944">
    <property type="term" value="P:positive regulation of transcription by RNA polymerase II"/>
    <property type="evidence" value="ECO:0000314"/>
    <property type="project" value="MGI"/>
</dbReference>
<dbReference type="GO" id="GO:0072107">
    <property type="term" value="P:positive regulation of ureteric bud formation"/>
    <property type="evidence" value="ECO:0000315"/>
    <property type="project" value="UniProtKB"/>
</dbReference>
<dbReference type="GO" id="GO:0034504">
    <property type="term" value="P:protein localization to nucleus"/>
    <property type="evidence" value="ECO:0000314"/>
    <property type="project" value="UniProtKB"/>
</dbReference>
<dbReference type="GO" id="GO:0072095">
    <property type="term" value="P:regulation of branch elongation involved in ureteric bud branching"/>
    <property type="evidence" value="ECO:0000315"/>
    <property type="project" value="UniProtKB"/>
</dbReference>
<dbReference type="GO" id="GO:0050678">
    <property type="term" value="P:regulation of epithelial cell proliferation"/>
    <property type="evidence" value="ECO:0000315"/>
    <property type="project" value="UniProtKB"/>
</dbReference>
<dbReference type="GO" id="GO:0010468">
    <property type="term" value="P:regulation of gene expression"/>
    <property type="evidence" value="ECO:0000316"/>
    <property type="project" value="MGI"/>
</dbReference>
<dbReference type="GO" id="GO:0032880">
    <property type="term" value="P:regulation of protein localization"/>
    <property type="evidence" value="ECO:0000316"/>
    <property type="project" value="MGI"/>
</dbReference>
<dbReference type="GO" id="GO:0008582">
    <property type="term" value="P:regulation of synaptic assembly at neuromuscular junction"/>
    <property type="evidence" value="ECO:0000316"/>
    <property type="project" value="MGI"/>
</dbReference>
<dbReference type="GO" id="GO:0045214">
    <property type="term" value="P:sarcomere organization"/>
    <property type="evidence" value="ECO:0000315"/>
    <property type="project" value="UniProtKB"/>
</dbReference>
<dbReference type="GO" id="GO:0098528">
    <property type="term" value="P:skeletal muscle fiber differentiation"/>
    <property type="evidence" value="ECO:0000315"/>
    <property type="project" value="UniProtKB"/>
</dbReference>
<dbReference type="GO" id="GO:0007519">
    <property type="term" value="P:skeletal muscle tissue development"/>
    <property type="evidence" value="ECO:0000315"/>
    <property type="project" value="UniProtKB"/>
</dbReference>
<dbReference type="GO" id="GO:0048538">
    <property type="term" value="P:thymus development"/>
    <property type="evidence" value="ECO:0000316"/>
    <property type="project" value="MGI"/>
</dbReference>
<dbReference type="GO" id="GO:0043586">
    <property type="term" value="P:tongue development"/>
    <property type="evidence" value="ECO:0000315"/>
    <property type="project" value="UniProtKB"/>
</dbReference>
<dbReference type="GO" id="GO:0061551">
    <property type="term" value="P:trigeminal ganglion development"/>
    <property type="evidence" value="ECO:0000315"/>
    <property type="project" value="UniProtKB"/>
</dbReference>
<dbReference type="CDD" id="cd00086">
    <property type="entry name" value="homeodomain"/>
    <property type="match status" value="1"/>
</dbReference>
<dbReference type="FunFam" id="1.10.10.60:FF:000085">
    <property type="entry name" value="SIX homeobox 5"/>
    <property type="match status" value="1"/>
</dbReference>
<dbReference type="Gene3D" id="1.10.10.60">
    <property type="entry name" value="Homeodomain-like"/>
    <property type="match status" value="1"/>
</dbReference>
<dbReference type="InterPro" id="IPR001356">
    <property type="entry name" value="HD"/>
</dbReference>
<dbReference type="InterPro" id="IPR017970">
    <property type="entry name" value="Homeobox_CS"/>
</dbReference>
<dbReference type="InterPro" id="IPR009057">
    <property type="entry name" value="Homeodomain-like_sf"/>
</dbReference>
<dbReference type="InterPro" id="IPR031701">
    <property type="entry name" value="SIX1_SD"/>
</dbReference>
<dbReference type="PANTHER" id="PTHR10390">
    <property type="entry name" value="HOMEOBOX PROTEIN SIX"/>
    <property type="match status" value="1"/>
</dbReference>
<dbReference type="PANTHER" id="PTHR10390:SF36">
    <property type="entry name" value="HOMEOBOX PROTEIN SIX4"/>
    <property type="match status" value="1"/>
</dbReference>
<dbReference type="Pfam" id="PF00046">
    <property type="entry name" value="Homeodomain"/>
    <property type="match status" value="1"/>
</dbReference>
<dbReference type="Pfam" id="PF16878">
    <property type="entry name" value="SIX1_SD"/>
    <property type="match status" value="1"/>
</dbReference>
<dbReference type="SMART" id="SM00389">
    <property type="entry name" value="HOX"/>
    <property type="match status" value="1"/>
</dbReference>
<dbReference type="SUPFAM" id="SSF46689">
    <property type="entry name" value="Homeodomain-like"/>
    <property type="match status" value="1"/>
</dbReference>
<dbReference type="PROSITE" id="PS00027">
    <property type="entry name" value="HOMEOBOX_1"/>
    <property type="match status" value="1"/>
</dbReference>
<dbReference type="PROSITE" id="PS50071">
    <property type="entry name" value="HOMEOBOX_2"/>
    <property type="match status" value="1"/>
</dbReference>
<comment type="function">
    <text evidence="4 7 8 9 10 11 12 13 14 15 16 17 18 19 20 23">Transcriptional regulator which can act as both a transcriptional repressor and activator by binding a DNA sequence on these target genes and is involved in processes like cell differentiation, cell migration and cell survival. Transactivates gene expression by binding a 5'-[CAT]A[CT][CT][CTG]GA[GAT]-3' motif present in the Trex site and from a 5'-TCA[AG][AG]TTNC-3' motif present in the MEF3 site of the muscle-specific genes enhancer (PubMed:14966291). Acts cooperatively with EYA proteins to transactivate their target genes through interaction and nuclear translocation of EYA protein (PubMed:10490620). Acts synergistically with SIX1 to regulate target genes involved in formation of various organs, including muscle, kidney, gonad, ganglia, olfactory epithelium and cranial skeleton. Plays a role in several important steps of muscle development. Controls the genesis of hypaxial myogenic progenitors in the dermomyotome by transactivating PAX3 and the delamination and migration of the hypaxial precursors from the ventral lip to the limb buds through the transactivation of PAX3, MET and LBX1 (PubMed:15788460). Controls myoblast determination by transactivating MYF5, MYOD1 and MYF6 (PubMed:15788460, PubMed:17592144). Controls somitic differentiation in myocyte through MYOG transactivation (PubMed:15788460). Plays a role in synaptogenesis and sarcomere organization by participating in myofiber specialization during embryogenesis by activating fast muscle program in the primary myotome resulting in an up-regulation of fast muscle genes, including ATP2A1, MYL1 and TNNT3 (PubMed:19962975, PubMed:21884692). Simultaneously, is also able to activate inhibitors of slow muscle genes, such as SOX6, HRASLS, and HDAC4, thereby restricting the activation of the slow muscle genes (PubMed:21884692). During muscle regeneration, negatively regulates differentiation of muscle satellite cells through down-regulation of MYOG expression (PubMed:20696153). During kidney development regulates the early stages of metanephros development and ureteric bud formation through regulation of GDNF, SALL1, PAX8 and PAX2 expression (PubMed:17300925). Plays a role in gonad development by regulating both testis determination and size determination. In gonadal sex determination, transactivates ZFPM2 by binding a MEF3 consensus sequence, resulting in SRY up-regulation. In gonadal size determination, transactivates NR5A1 by binding a MEF3 consensus sequence resulting in gonadal precursor cell formation regulation (PubMed:23987514). During olfactory development mediates the specification and patterning of olfactory placode through fibroblast growth factor and BMP4 signaling pathways and also regulates epithelial cell proliferation during placode formation (PubMed:19027001). Promotes survival of sensory neurons during early trigeminal gangliogenesis (PubMed:16938278). In the developing dorsal root ganglia, up-regulates SLC12A2 transcription (PubMed:15955062). Regulates early thymus/parathyroid organogenesis through regulation of GCM2 and FOXN1 expression (PubMed:16530750). Forms gustatory papillae during development of the tongue (PubMed:21978088). Also plays a role during embryonic cranial skeleton morphogenesis (PubMed:20515681).</text>
</comment>
<comment type="subunit">
    <text evidence="4 6 23">Interacts with EYA3; acts cooperatively with EYA3 to transactivate target genes through interaction and nuclear translocation of EYA3 protein (PubMed:10490620, PubMed:12215533).</text>
</comment>
<comment type="interaction">
    <interactant intactId="EBI-986524">
        <id>Q61321</id>
    </interactant>
    <interactant intactId="EBI-1573712">
        <id>O70546</id>
        <label>Kdm6a</label>
    </interactant>
    <organismsDiffer>false</organismsDiffer>
    <experiments>2</experiments>
</comment>
<comment type="subcellular location">
    <subcellularLocation>
        <location evidence="21 22">Nucleus</location>
    </subcellularLocation>
    <subcellularLocation>
        <location evidence="21 22">Cytoplasm</location>
    </subcellularLocation>
</comment>
<comment type="alternative products">
    <event type="alternative splicing"/>
    <isoform>
        <id>Q61321-1</id>
        <name>1</name>
        <name>SM</name>
        <sequence type="displayed"/>
    </isoform>
    <isoform>
        <id>Q61321-2</id>
        <name>2</name>
        <name>M18</name>
        <sequence type="described" ref="VSP_002293 VSP_002294"/>
    </isoform>
    <isoform>
        <id>Q61321-3</id>
        <name>3</name>
        <name>M8</name>
        <sequence type="described" ref="VSP_002293 VSP_002295 VSP_002296"/>
    </isoform>
    <text>Additional isoforms seem to exist.</text>
</comment>
<comment type="tissue specificity">
    <text evidence="5 17">Mainly expressed in the skeletal muscle (isoform 1 and isoform 2 but not isoform 3), and weakly in the heart. Also found in the retina and the distal tube of kidney. Expressed in skeletal muscle, nasal epithelium, cochlea, parathyroid and salivary gland (PubMed:11313460). Expressed in muscle satellite cells of normal and regenerating muscles (PubMed:20696153).</text>
</comment>
<comment type="developmental stage">
    <text evidence="5 8 12 14 15 19">At 8.5 dpc expressed at the surface ectoderm outside the neural folds, somites, presomitic mesoderm. At 9.5 dpc expressed at the nasal and otic placodes, cranial ganglia, branchial arches, somites (dermamyotomes and sclerotomes). At 10.5-11.5 dpc expressed at the nasal pits, otic vesicles, cranial ganglia, dorsal root ganglia, branchial arches, somites, myotomes, limb mesenchyme, notochord, mesonephros. At 12.5-13.5 dpc expressed in skeletal muscles, mesenchyme in limbs and digits, nasal epithelium, inner ear (PubMed:11313460). Weakly expressed in the nephrogenic cord on 9.5 dpc and in the metanephric mesenchyme on 10.5 dpc (PubMed:17300925). At 11.5 dpc expressed in the epithelium of the lateral lingual swellings, and in the tongue epithelium, mesenchyme, and muscles at 12.5 dpc. In the fungiform papillae, expressed in the epithelium at 14-16.5 dpc. In the circumvallate and foliate papillae, expression is observed in the trench wall of these papillae at 15.5 dpc-P0 (PubMed:21978088). At 11.5 dpc mainly found in limbs, and somites, where is expressed in the dorsal root ganglion, myotomes, and ventral and dorsal dermomyotomal lips (PubMed:15788460). Expressed in a wide domain of the ectoderm in the presumptive olfactory region and in the thickened olfactory placode. Expressed in the peripheral precursors of the pit. At 12.5 dpc-14.5 dpc, expression become progressively restricted to the apical and basal progenitors. Also expressed strongly in the preplacodal region at 8.0 dpc and in the presumptive olfactory ectoderm at 9.0 dpc (PubMed:19027001). At 10.5 dpc expressed in the progenitors of the dermomyotome and in the myocytes (PubMed:19962975).</text>
</comment>
<comment type="disruption phenotype">
    <text evidence="5 8 9 11 19 20">Mice are viable and fertile; no gross morphological or histological abnormalities, or defects in hearing ability are detected in homozygous mice (PubMed:11313460). Double homozygous SIX1 and SIX4 knockout mice die soon after birth and show developmental defects in various organs (PubMed:15955062). Double homozygous SIX1 and SIX4 knockout mice causes severe defects in the trigeminal ganglia (PubMed:16938278). Double homozygous SIX1 and SIX4 knockout mice exhibit more severe kidney phenotypes than the SIX1 knockout mice. Double homozygous SIX1 and SIX4 knockout embryos show distinct morphological changes: fusion of the lateral lingual swellings is delayed, and the tongue is poorly developed. The primordia of fungiform papillae appears earlier, and the papillae rapidly increases in size; thus fusion of each papilla is evident. The circumvallate papillae show severe defects: invagination of the trenches starts asymmetrically, which results in longer and shorter trenches (PubMed:21978088). Double homozygous SIX1 and SIX4 knockout neonatal mice have a male-to-female sex-reversal phenotype in XY mutant gonads (PubMed:23987514). Double homozygous SIX1 and SIX4 knockout neonatal mice are characterized by severe craniofacial and rib defects, and general muscle hypoplasia (PubMed:15788460).</text>
</comment>
<comment type="miscellaneous">
    <molecule>Isoform 2</molecule>
    <text evidence="24">Incomplete sequence.</text>
</comment>
<comment type="miscellaneous">
    <molecule>Isoform 3</molecule>
    <text evidence="24">Incomplete sequence.</text>
</comment>
<comment type="similarity">
    <text evidence="24">Belongs to the SIX/Sine oculis homeobox family.</text>
</comment>
<reference key="1">
    <citation type="journal article" date="1996" name="Nucleic Acids Res.">
        <title>Structure, function and expression of a murine homeobox protein AREC3, a homologue of Drosophila sine oculis gene product, and implication in development.</title>
        <authorList>
            <person name="Kawakami K."/>
            <person name="Ohto H."/>
            <person name="Ikeda K."/>
            <person name="Roeder R.G."/>
        </authorList>
    </citation>
    <scope>NUCLEOTIDE SEQUENCE [MRNA] (ISOFORM 1)</scope>
    <scope>PARTIAL NUCLEOTIDE SEQUENCE [MRNA] (ISOFORMS 2 AND 3)</scope>
    <scope>SUBCELLULAR LOCATION</scope>
    <source>
        <strain>BALB/cJ</strain>
        <tissue>Myoblast</tissue>
        <tissue>Skeletal muscle</tissue>
    </source>
</reference>
<reference key="2">
    <citation type="journal article" date="2004" name="Genome Res.">
        <title>The status, quality, and expansion of the NIH full-length cDNA project: the Mammalian Gene Collection (MGC).</title>
        <authorList>
            <consortium name="The MGC Project Team"/>
        </authorList>
    </citation>
    <scope>NUCLEOTIDE SEQUENCE [LARGE SCALE MRNA] (ISOFORM 1)</scope>
    <source>
        <tissue>Brain</tissue>
    </source>
</reference>
<reference key="3">
    <citation type="journal article" date="1998" name="Exp. Eye Res.">
        <title>Localization of Six4/AREC3 in the developing mouse retina; implications in mammalian retinal development.</title>
        <authorList>
            <person name="Niiya A."/>
            <person name="Ohto H."/>
            <person name="Kawakami K."/>
            <person name="Araki M."/>
        </authorList>
    </citation>
    <scope>SUBCELLULAR LOCATION</scope>
</reference>
<reference key="4">
    <citation type="journal article" date="1999" name="Mol. Cell. Biol.">
        <title>Cooperation of six and eya in activation of their target genes through nuclear translocation of Eya.</title>
        <authorList>
            <person name="Ohto H."/>
            <person name="Kamada S."/>
            <person name="Tago K."/>
            <person name="Tominaga S."/>
            <person name="Ozaki H."/>
            <person name="Sato S."/>
            <person name="Kawakami K."/>
        </authorList>
    </citation>
    <scope>FUNCTION</scope>
</reference>
<reference key="5">
    <citation type="journal article" date="2001" name="Mol. Cell. Biol.">
        <title>Six4, a putative myogenin gene regulator, is not essential for mouse embryonal development.</title>
        <authorList>
            <person name="Ozaki H."/>
            <person name="Watanabe Y."/>
            <person name="Takahashi K."/>
            <person name="Kitamura K."/>
            <person name="Tanaka A."/>
            <person name="Urase K."/>
            <person name="Momoi T."/>
            <person name="Sudo K."/>
            <person name="Sakagami J."/>
            <person name="Asano M."/>
            <person name="Iwakura Y."/>
            <person name="Kawakami K."/>
        </authorList>
    </citation>
    <scope>DISRUPTION PHENOTYPE</scope>
    <scope>DEVELOPMENTAL STAGE</scope>
    <scope>TISSUE SPECIFICITY</scope>
</reference>
<reference key="6">
    <citation type="journal article" date="2002" name="Mol. Cell. Biol.">
        <title>Molecular interaction and synergistic activation of a promoter by Six, Eya, and Dach proteins mediated through CREB binding protein.</title>
        <authorList>
            <person name="Ikeda K."/>
            <person name="Watanabe Y."/>
            <person name="Ohto H."/>
            <person name="Kawakami K."/>
        </authorList>
    </citation>
    <scope>INTERACTION WITH EYA3</scope>
</reference>
<reference key="7">
    <citation type="journal article" date="2004" name="Mol. Cell. Biol.">
        <title>Quantitative proteomic identification of six4 as the trex-binding factor in the muscle creatine kinase enhancer.</title>
        <authorList>
            <person name="Himeda C.L."/>
            <person name="Ranish J.A."/>
            <person name="Angello J.C."/>
            <person name="Maire P."/>
            <person name="Aebersold R."/>
            <person name="Hauschka S.D."/>
        </authorList>
    </citation>
    <scope>FUNCTION</scope>
</reference>
<reference key="8">
    <citation type="journal article" date="2005" name="Development">
        <title>Six1 and Six4 homeoproteins are required for Pax3 and Mrf expression during myogenesis in the mouse embryo.</title>
        <authorList>
            <person name="Grifone R."/>
            <person name="Demignon J."/>
            <person name="Houbron C."/>
            <person name="Souil E."/>
            <person name="Niro C."/>
            <person name="Seller M.J."/>
            <person name="Hamard G."/>
            <person name="Maire P."/>
        </authorList>
    </citation>
    <scope>FUNCTION</scope>
    <scope>DISRUPTION PHENOTYPE</scope>
    <scope>DEVELOPMENTAL STAGE</scope>
</reference>
<reference key="9">
    <citation type="journal article" date="2005" name="FEBS J.">
        <title>Slc12a2 is a direct target of two closely related homeobox proteins, Six1 and Six4.</title>
        <authorList>
            <person name="Ando Z."/>
            <person name="Sato S."/>
            <person name="Ikeda K."/>
            <person name="Kawakami K."/>
        </authorList>
    </citation>
    <scope>FUNCTION</scope>
    <scope>DISRUPTION PHENOTYPE</scope>
</reference>
<reference key="10">
    <citation type="journal article" date="2006" name="Brain Res.">
        <title>Six1 and Six4 promote survival of sensory neurons during early trigeminal gangliogenesis.</title>
        <authorList>
            <person name="Konishi Y."/>
            <person name="Ikeda K."/>
            <person name="Iwakura Y."/>
            <person name="Kawakami K."/>
        </authorList>
    </citation>
    <scope>FUNCTION</scope>
    <scope>DISRUPTION PHENOTYPE</scope>
</reference>
<reference key="11">
    <citation type="journal article" date="2006" name="Dev. Biol.">
        <title>Patterning of the third pharyngeal pouch into thymus/parathyroid by Six and Eya1.</title>
        <authorList>
            <person name="Zou D."/>
            <person name="Silvius D."/>
            <person name="Davenport J."/>
            <person name="Grifone R."/>
            <person name="Maire P."/>
            <person name="Xu P.X."/>
        </authorList>
    </citation>
    <scope>FUNCTION</scope>
</reference>
<reference key="12">
    <citation type="journal article" date="2007" name="Mech. Dev.">
        <title>Six1 and Six4 are essential for Gdnf expression in the metanephric mesenchyme and ureteric bud formation, while Six1 deficiency alone causes mesonephric-tubule defects.</title>
        <authorList>
            <person name="Kobayashi H."/>
            <person name="Kawakami K."/>
            <person name="Asashima M."/>
            <person name="Nishinakamura R."/>
        </authorList>
    </citation>
    <scope>DEVELOPMENTAL STAGE</scope>
    <scope>FUNCTION</scope>
</reference>
<reference key="13">
    <citation type="journal article" date="2007" name="Proc. Natl. Acad. Sci. U.S.A.">
        <title>Six proteins regulate the activation of Myf5 expression in embryonic mouse limbs.</title>
        <authorList>
            <person name="Giordani J."/>
            <person name="Bajard L."/>
            <person name="Demignon J."/>
            <person name="Daubas P."/>
            <person name="Buckingham M."/>
            <person name="Maire P."/>
        </authorList>
    </citation>
    <scope>FUNCTION</scope>
</reference>
<reference key="14">
    <citation type="journal article" date="2009" name="Dev. Biol.">
        <title>Initiation of olfactory placode development and neurogenesis is blocked in mice lacking both Six1 and Six4.</title>
        <authorList>
            <person name="Chen B."/>
            <person name="Kim E.H."/>
            <person name="Xu P.X."/>
        </authorList>
    </citation>
    <scope>FUNCTION</scope>
    <scope>DEVELOPMENTAL STAGE</scope>
</reference>
<reference key="15">
    <citation type="journal article" date="2010" name="Dev. Biol.">
        <title>Six1 and Six4 gene expression is necessary to activate the fast-type muscle gene program in the mouse primary myotome.</title>
        <authorList>
            <person name="Niro C."/>
            <person name="Demignon J."/>
            <person name="Vincent S."/>
            <person name="Liu Y."/>
            <person name="Giordani J."/>
            <person name="Sgarioto N."/>
            <person name="Favier M."/>
            <person name="Guillet-Deniau I."/>
            <person name="Blais A."/>
            <person name="Maire P."/>
        </authorList>
    </citation>
    <scope>FUNCTION</scope>
    <scope>DEVELOPMENTAL STAGE</scope>
</reference>
<reference key="16">
    <citation type="journal article" date="2010" name="Dev. Biol.">
        <title>Inactivation of Six2 in mouse identifies a novel genetic mechanism controlling development and growth of the cranial base.</title>
        <authorList>
            <person name="He G."/>
            <person name="Tavella S."/>
            <person name="Hanley K.P."/>
            <person name="Self M."/>
            <person name="Oliver G."/>
            <person name="Grifone R."/>
            <person name="Hanley N."/>
            <person name="Ward C."/>
            <person name="Bobola N."/>
        </authorList>
    </citation>
    <scope>FUNCTION</scope>
</reference>
<reference key="17">
    <citation type="journal article" date="2010" name="Exp. Cell Res.">
        <title>Six family genes control the proliferation and differentiation of muscle satellite cells.</title>
        <authorList>
            <person name="Yajima H."/>
            <person name="Motohashi N."/>
            <person name="Ono Y."/>
            <person name="Sato S."/>
            <person name="Ikeda K."/>
            <person name="Masuda S."/>
            <person name="Yada E."/>
            <person name="Kanesaki H."/>
            <person name="Miyagoe-Suzuki Y."/>
            <person name="Takeda S."/>
            <person name="Kawakami K."/>
        </authorList>
    </citation>
    <scope>FUNCTION</scope>
    <scope>TISSUE SPECIFICITY</scope>
</reference>
<reference key="18">
    <citation type="journal article" date="2011" name="Dev. Biol.">
        <title>Genesis of muscle fiber-type diversity during mouse embryogenesis relies on Six1 and Six4 gene expression.</title>
        <authorList>
            <person name="Richard A.F."/>
            <person name="Demignon J."/>
            <person name="Sakakibara I."/>
            <person name="Pujol J."/>
            <person name="Favier M."/>
            <person name="Strochlic L."/>
            <person name="Le Grand F."/>
            <person name="Sgarioto N."/>
            <person name="Guernec A."/>
            <person name="Schmitt A."/>
            <person name="Cagnard N."/>
            <person name="Huang R."/>
            <person name="Legay C."/>
            <person name="Guillet-Deniau I."/>
            <person name="Maire P."/>
        </authorList>
    </citation>
    <scope>FUNCTION</scope>
</reference>
<reference key="19">
    <citation type="journal article" date="2011" name="J. Anat.">
        <title>Development of gustatory papillae in the absence of Six1 and Six4.</title>
        <authorList>
            <person name="Suzuki Y."/>
            <person name="Ikeda K."/>
            <person name="Kawakami K."/>
        </authorList>
    </citation>
    <scope>FUNCTION</scope>
    <scope>DISRUPTION PHENOTYPE</scope>
    <scope>DEVELOPMENTAL STAGE</scope>
</reference>
<reference key="20">
    <citation type="journal article" date="2013" name="Dev. Cell">
        <title>Homeoproteins Six1 and Six4 regulate male sex determination and mouse gonadal development.</title>
        <authorList>
            <person name="Fujimoto Y."/>
            <person name="Tanaka S.S."/>
            <person name="Yamaguchi Y.L."/>
            <person name="Kobayashi H."/>
            <person name="Kuroki S."/>
            <person name="Tachibana M."/>
            <person name="Shinomura M."/>
            <person name="Kanai Y."/>
            <person name="Morohashi K."/>
            <person name="Kawakami K."/>
            <person name="Nishinakamura R."/>
        </authorList>
    </citation>
    <scope>FUNCTION</scope>
    <scope>DISRUPTION PHENOTYPE</scope>
</reference>
<feature type="initiator methionine" description="Removed" evidence="1">
    <location>
        <position position="1"/>
    </location>
</feature>
<feature type="chain" id="PRO_0000049304" description="Homeobox protein SIX4">
    <location>
        <begin position="2"/>
        <end position="775"/>
    </location>
</feature>
<feature type="DNA-binding region" description="Homeobox" evidence="2">
    <location>
        <begin position="216"/>
        <end position="275"/>
    </location>
</feature>
<feature type="region of interest" description="Disordered" evidence="3">
    <location>
        <begin position="1"/>
        <end position="76"/>
    </location>
</feature>
<feature type="region of interest" description="Disordered" evidence="3">
    <location>
        <begin position="263"/>
        <end position="313"/>
    </location>
</feature>
<feature type="region of interest" description="Transactivation domain">
    <location>
        <begin position="582"/>
        <end position="775"/>
    </location>
</feature>
<feature type="compositionally biased region" description="Polar residues" evidence="3">
    <location>
        <begin position="1"/>
        <end position="10"/>
    </location>
</feature>
<feature type="compositionally biased region" description="Low complexity" evidence="3">
    <location>
        <begin position="54"/>
        <end position="63"/>
    </location>
</feature>
<feature type="compositionally biased region" description="Basic and acidic residues" evidence="3">
    <location>
        <begin position="271"/>
        <end position="283"/>
    </location>
</feature>
<feature type="compositionally biased region" description="Basic and acidic residues" evidence="3">
    <location>
        <begin position="292"/>
        <end position="301"/>
    </location>
</feature>
<feature type="modified residue" description="N-acetylserine" evidence="1">
    <location>
        <position position="2"/>
    </location>
</feature>
<feature type="modified residue" description="Phosphoserine" evidence="1">
    <location>
        <position position="634"/>
    </location>
</feature>
<feature type="splice variant" id="VSP_002293" description="In isoform 2 and isoform 3." evidence="24">
    <original>MSSSSPTGQ</original>
    <variation>QKAAIRLHYFALAAILM</variation>
    <location>
        <begin position="1"/>
        <end position="9"/>
    </location>
</feature>
<feature type="splice variant" id="VSP_002294" description="In isoform 2." evidence="24">
    <location>
        <begin position="37"/>
        <end position="100"/>
    </location>
</feature>
<feature type="splice variant" id="VSP_002295" description="In isoform 3." evidence="24">
    <original>ERARGRPLGAVDKYRLRRKFPLPRTIWDGEETVYCFKEKSRNALKELYKQNRYPSPAEKRHLAKITGLSLTQVSNWFKNRRQRDRNPSETQSKSESDGNPSTEDESSKGHEDLSPHPLSGASDGVTNLSLSS</original>
    <variation>AGNSPCPAPSGTARRRCIVSRRSRATRSRSSTSRIATPRRLRSGTWPRSPASPSPRSATGSRTGGSVTETPPRPSPKANRMATPVPRMNPARDMRICLLIHFQAHLMASPTSASLATWSQYICNKLEMLRYH</variation>
    <location>
        <begin position="188"/>
        <end position="319"/>
    </location>
</feature>
<feature type="splice variant" id="VSP_002296" description="In isoform 3." evidence="24">
    <location>
        <begin position="320"/>
        <end position="775"/>
    </location>
</feature>